<reference key="1">
    <citation type="journal article" date="2009" name="J. Bacteriol.">
        <title>Genome sequence of Azotobacter vinelandii, an obligate aerobe specialized to support diverse anaerobic metabolic processes.</title>
        <authorList>
            <person name="Setubal J.C."/>
            <person name="Dos Santos P."/>
            <person name="Goldman B.S."/>
            <person name="Ertesvaag H."/>
            <person name="Espin G."/>
            <person name="Rubio L.M."/>
            <person name="Valla S."/>
            <person name="Almeida N.F."/>
            <person name="Balasubramanian D."/>
            <person name="Cromes L."/>
            <person name="Curatti L."/>
            <person name="Du Z."/>
            <person name="Godsy E."/>
            <person name="Goodner B."/>
            <person name="Hellner-Burris K."/>
            <person name="Hernandez J.A."/>
            <person name="Houmiel K."/>
            <person name="Imperial J."/>
            <person name="Kennedy C."/>
            <person name="Larson T.J."/>
            <person name="Latreille P."/>
            <person name="Ligon L.S."/>
            <person name="Lu J."/>
            <person name="Maerk M."/>
            <person name="Miller N.M."/>
            <person name="Norton S."/>
            <person name="O'Carroll I.P."/>
            <person name="Paulsen I."/>
            <person name="Raulfs E.C."/>
            <person name="Roemer R."/>
            <person name="Rosser J."/>
            <person name="Segura D."/>
            <person name="Slater S."/>
            <person name="Stricklin S.L."/>
            <person name="Studholme D.J."/>
            <person name="Sun J."/>
            <person name="Viana C.J."/>
            <person name="Wallin E."/>
            <person name="Wang B."/>
            <person name="Wheeler C."/>
            <person name="Zhu H."/>
            <person name="Dean D.R."/>
            <person name="Dixon R."/>
            <person name="Wood D."/>
        </authorList>
    </citation>
    <scope>NUCLEOTIDE SEQUENCE [LARGE SCALE GENOMIC DNA]</scope>
    <source>
        <strain>DJ / ATCC BAA-1303</strain>
    </source>
</reference>
<evidence type="ECO:0000255" key="1">
    <source>
        <dbReference type="HAMAP-Rule" id="MF_00736"/>
    </source>
</evidence>
<evidence type="ECO:0000305" key="2"/>
<dbReference type="EMBL" id="CP001157">
    <property type="protein sequence ID" value="ACO76864.1"/>
    <property type="molecule type" value="Genomic_DNA"/>
</dbReference>
<dbReference type="RefSeq" id="WP_012699292.1">
    <property type="nucleotide sequence ID" value="NC_012560.1"/>
</dbReference>
<dbReference type="SMR" id="C1DKK1"/>
<dbReference type="STRING" id="322710.Avin_06120"/>
<dbReference type="EnsemblBacteria" id="ACO76864">
    <property type="protein sequence ID" value="ACO76864"/>
    <property type="gene ID" value="Avin_06120"/>
</dbReference>
<dbReference type="GeneID" id="88184025"/>
<dbReference type="KEGG" id="avn:Avin_06120"/>
<dbReference type="eggNOG" id="COG0080">
    <property type="taxonomic scope" value="Bacteria"/>
</dbReference>
<dbReference type="HOGENOM" id="CLU_074237_2_0_6"/>
<dbReference type="OrthoDB" id="9802408at2"/>
<dbReference type="Proteomes" id="UP000002424">
    <property type="component" value="Chromosome"/>
</dbReference>
<dbReference type="GO" id="GO:0022625">
    <property type="term" value="C:cytosolic large ribosomal subunit"/>
    <property type="evidence" value="ECO:0007669"/>
    <property type="project" value="TreeGrafter"/>
</dbReference>
<dbReference type="GO" id="GO:0070180">
    <property type="term" value="F:large ribosomal subunit rRNA binding"/>
    <property type="evidence" value="ECO:0007669"/>
    <property type="project" value="UniProtKB-UniRule"/>
</dbReference>
<dbReference type="GO" id="GO:0003735">
    <property type="term" value="F:structural constituent of ribosome"/>
    <property type="evidence" value="ECO:0007669"/>
    <property type="project" value="InterPro"/>
</dbReference>
<dbReference type="GO" id="GO:0006412">
    <property type="term" value="P:translation"/>
    <property type="evidence" value="ECO:0007669"/>
    <property type="project" value="UniProtKB-UniRule"/>
</dbReference>
<dbReference type="CDD" id="cd00349">
    <property type="entry name" value="Ribosomal_L11"/>
    <property type="match status" value="1"/>
</dbReference>
<dbReference type="FunFam" id="1.10.10.250:FF:000001">
    <property type="entry name" value="50S ribosomal protein L11"/>
    <property type="match status" value="1"/>
</dbReference>
<dbReference type="FunFam" id="3.30.1550.10:FF:000001">
    <property type="entry name" value="50S ribosomal protein L11"/>
    <property type="match status" value="1"/>
</dbReference>
<dbReference type="Gene3D" id="1.10.10.250">
    <property type="entry name" value="Ribosomal protein L11, C-terminal domain"/>
    <property type="match status" value="1"/>
</dbReference>
<dbReference type="Gene3D" id="3.30.1550.10">
    <property type="entry name" value="Ribosomal protein L11/L12, N-terminal domain"/>
    <property type="match status" value="1"/>
</dbReference>
<dbReference type="HAMAP" id="MF_00736">
    <property type="entry name" value="Ribosomal_uL11"/>
    <property type="match status" value="1"/>
</dbReference>
<dbReference type="InterPro" id="IPR000911">
    <property type="entry name" value="Ribosomal_uL11"/>
</dbReference>
<dbReference type="InterPro" id="IPR006519">
    <property type="entry name" value="Ribosomal_uL11_bac-typ"/>
</dbReference>
<dbReference type="InterPro" id="IPR020783">
    <property type="entry name" value="Ribosomal_uL11_C"/>
</dbReference>
<dbReference type="InterPro" id="IPR036769">
    <property type="entry name" value="Ribosomal_uL11_C_sf"/>
</dbReference>
<dbReference type="InterPro" id="IPR020785">
    <property type="entry name" value="Ribosomal_uL11_CS"/>
</dbReference>
<dbReference type="InterPro" id="IPR020784">
    <property type="entry name" value="Ribosomal_uL11_N"/>
</dbReference>
<dbReference type="InterPro" id="IPR036796">
    <property type="entry name" value="Ribosomal_uL11_N_sf"/>
</dbReference>
<dbReference type="NCBIfam" id="TIGR01632">
    <property type="entry name" value="L11_bact"/>
    <property type="match status" value="1"/>
</dbReference>
<dbReference type="PANTHER" id="PTHR11661">
    <property type="entry name" value="60S RIBOSOMAL PROTEIN L12"/>
    <property type="match status" value="1"/>
</dbReference>
<dbReference type="PANTHER" id="PTHR11661:SF1">
    <property type="entry name" value="LARGE RIBOSOMAL SUBUNIT PROTEIN UL11M"/>
    <property type="match status" value="1"/>
</dbReference>
<dbReference type="Pfam" id="PF00298">
    <property type="entry name" value="Ribosomal_L11"/>
    <property type="match status" value="1"/>
</dbReference>
<dbReference type="Pfam" id="PF03946">
    <property type="entry name" value="Ribosomal_L11_N"/>
    <property type="match status" value="1"/>
</dbReference>
<dbReference type="SMART" id="SM00649">
    <property type="entry name" value="RL11"/>
    <property type="match status" value="1"/>
</dbReference>
<dbReference type="SUPFAM" id="SSF54747">
    <property type="entry name" value="Ribosomal L11/L12e N-terminal domain"/>
    <property type="match status" value="1"/>
</dbReference>
<dbReference type="SUPFAM" id="SSF46906">
    <property type="entry name" value="Ribosomal protein L11, C-terminal domain"/>
    <property type="match status" value="1"/>
</dbReference>
<dbReference type="PROSITE" id="PS00359">
    <property type="entry name" value="RIBOSOMAL_L11"/>
    <property type="match status" value="1"/>
</dbReference>
<feature type="chain" id="PRO_1000212763" description="Large ribosomal subunit protein uL11">
    <location>
        <begin position="1"/>
        <end position="143"/>
    </location>
</feature>
<sequence>MAKKIQAYIKLQVKAGQANPSPPVGPALGQHGVNIMEFCKAFNARTQGMEPGLPTPVIITVYSDRSFTFETKSTPASVLLKKAAGISSGSSRPNTQKVGTVNRAQLEEIAKAKQADLTAADLEAAVRTIAGSARSMGLNVEGV</sequence>
<accession>C1DKK1</accession>
<keyword id="KW-0488">Methylation</keyword>
<keyword id="KW-0687">Ribonucleoprotein</keyword>
<keyword id="KW-0689">Ribosomal protein</keyword>
<keyword id="KW-0694">RNA-binding</keyword>
<keyword id="KW-0699">rRNA-binding</keyword>
<name>RL11_AZOVD</name>
<proteinExistence type="inferred from homology"/>
<protein>
    <recommendedName>
        <fullName evidence="1">Large ribosomal subunit protein uL11</fullName>
    </recommendedName>
    <alternativeName>
        <fullName evidence="2">50S ribosomal protein L11</fullName>
    </alternativeName>
</protein>
<comment type="function">
    <text evidence="1">Forms part of the ribosomal stalk which helps the ribosome interact with GTP-bound translation factors.</text>
</comment>
<comment type="subunit">
    <text evidence="1">Part of the ribosomal stalk of the 50S ribosomal subunit. Interacts with L10 and the large rRNA to form the base of the stalk. L10 forms an elongated spine to which L12 dimers bind in a sequential fashion forming a multimeric L10(L12)X complex.</text>
</comment>
<comment type="PTM">
    <text evidence="1">One or more lysine residues are methylated.</text>
</comment>
<comment type="similarity">
    <text evidence="1">Belongs to the universal ribosomal protein uL11 family.</text>
</comment>
<organism>
    <name type="scientific">Azotobacter vinelandii (strain DJ / ATCC BAA-1303)</name>
    <dbReference type="NCBI Taxonomy" id="322710"/>
    <lineage>
        <taxon>Bacteria</taxon>
        <taxon>Pseudomonadati</taxon>
        <taxon>Pseudomonadota</taxon>
        <taxon>Gammaproteobacteria</taxon>
        <taxon>Pseudomonadales</taxon>
        <taxon>Pseudomonadaceae</taxon>
        <taxon>Azotobacter</taxon>
    </lineage>
</organism>
<gene>
    <name evidence="1" type="primary">rplK</name>
    <name type="ordered locus">Avin_06120</name>
</gene>